<feature type="chain" id="PRO_1000120682" description="Small ribosomal subunit protein bS21">
    <location>
        <begin position="1"/>
        <end position="71"/>
    </location>
</feature>
<feature type="region of interest" description="Disordered" evidence="2">
    <location>
        <begin position="43"/>
        <end position="71"/>
    </location>
</feature>
<feature type="compositionally biased region" description="Basic residues" evidence="2">
    <location>
        <begin position="46"/>
        <end position="59"/>
    </location>
</feature>
<feature type="compositionally biased region" description="Basic and acidic residues" evidence="2">
    <location>
        <begin position="60"/>
        <end position="71"/>
    </location>
</feature>
<accession>B2K2I4</accession>
<comment type="similarity">
    <text evidence="1">Belongs to the bacterial ribosomal protein bS21 family.</text>
</comment>
<name>RS21_YERPB</name>
<organism>
    <name type="scientific">Yersinia pseudotuberculosis serotype IB (strain PB1/+)</name>
    <dbReference type="NCBI Taxonomy" id="502801"/>
    <lineage>
        <taxon>Bacteria</taxon>
        <taxon>Pseudomonadati</taxon>
        <taxon>Pseudomonadota</taxon>
        <taxon>Gammaproteobacteria</taxon>
        <taxon>Enterobacterales</taxon>
        <taxon>Yersiniaceae</taxon>
        <taxon>Yersinia</taxon>
    </lineage>
</organism>
<reference key="1">
    <citation type="submission" date="2008-04" db="EMBL/GenBank/DDBJ databases">
        <title>Complete sequence of Yersinia pseudotuberculosis PB1/+.</title>
        <authorList>
            <person name="Copeland A."/>
            <person name="Lucas S."/>
            <person name="Lapidus A."/>
            <person name="Glavina del Rio T."/>
            <person name="Dalin E."/>
            <person name="Tice H."/>
            <person name="Bruce D."/>
            <person name="Goodwin L."/>
            <person name="Pitluck S."/>
            <person name="Munk A.C."/>
            <person name="Brettin T."/>
            <person name="Detter J.C."/>
            <person name="Han C."/>
            <person name="Tapia R."/>
            <person name="Schmutz J."/>
            <person name="Larimer F."/>
            <person name="Land M."/>
            <person name="Hauser L."/>
            <person name="Challacombe J.F."/>
            <person name="Green L."/>
            <person name="Lindler L.E."/>
            <person name="Nikolich M.P."/>
            <person name="Richardson P."/>
        </authorList>
    </citation>
    <scope>NUCLEOTIDE SEQUENCE [LARGE SCALE GENOMIC DNA]</scope>
    <source>
        <strain>PB1/+</strain>
    </source>
</reference>
<gene>
    <name evidence="1" type="primary">rpsU</name>
    <name type="ordered locus">YPTS_3560</name>
</gene>
<sequence length="71" mass="8500">MPVIKVRENEPFDVALRRFKRSCEKAGVLAEVRRREFYEKPTTERKRAKASAVKRHAKKLARENARRTRLY</sequence>
<proteinExistence type="inferred from homology"/>
<keyword id="KW-0687">Ribonucleoprotein</keyword>
<keyword id="KW-0689">Ribosomal protein</keyword>
<protein>
    <recommendedName>
        <fullName evidence="1">Small ribosomal subunit protein bS21</fullName>
    </recommendedName>
    <alternativeName>
        <fullName evidence="3">30S ribosomal protein S21</fullName>
    </alternativeName>
</protein>
<dbReference type="EMBL" id="CP001048">
    <property type="protein sequence ID" value="ACC90513.1"/>
    <property type="molecule type" value="Genomic_DNA"/>
</dbReference>
<dbReference type="RefSeq" id="WP_001144069.1">
    <property type="nucleotide sequence ID" value="NZ_CP009780.1"/>
</dbReference>
<dbReference type="SMR" id="B2K2I4"/>
<dbReference type="GeneID" id="98390195"/>
<dbReference type="KEGG" id="ypb:YPTS_3560"/>
<dbReference type="PATRIC" id="fig|502801.10.peg.3007"/>
<dbReference type="GO" id="GO:1990904">
    <property type="term" value="C:ribonucleoprotein complex"/>
    <property type="evidence" value="ECO:0007669"/>
    <property type="project" value="UniProtKB-KW"/>
</dbReference>
<dbReference type="GO" id="GO:0005840">
    <property type="term" value="C:ribosome"/>
    <property type="evidence" value="ECO:0007669"/>
    <property type="project" value="UniProtKB-KW"/>
</dbReference>
<dbReference type="GO" id="GO:0003735">
    <property type="term" value="F:structural constituent of ribosome"/>
    <property type="evidence" value="ECO:0007669"/>
    <property type="project" value="InterPro"/>
</dbReference>
<dbReference type="GO" id="GO:0006412">
    <property type="term" value="P:translation"/>
    <property type="evidence" value="ECO:0007669"/>
    <property type="project" value="UniProtKB-UniRule"/>
</dbReference>
<dbReference type="FunFam" id="1.20.5.1150:FF:000001">
    <property type="entry name" value="30S ribosomal protein S21"/>
    <property type="match status" value="1"/>
</dbReference>
<dbReference type="Gene3D" id="1.20.5.1150">
    <property type="entry name" value="Ribosomal protein S8"/>
    <property type="match status" value="1"/>
</dbReference>
<dbReference type="HAMAP" id="MF_00358">
    <property type="entry name" value="Ribosomal_bS21"/>
    <property type="match status" value="1"/>
</dbReference>
<dbReference type="InterPro" id="IPR001911">
    <property type="entry name" value="Ribosomal_bS21"/>
</dbReference>
<dbReference type="InterPro" id="IPR018278">
    <property type="entry name" value="Ribosomal_bS21_CS"/>
</dbReference>
<dbReference type="InterPro" id="IPR038380">
    <property type="entry name" value="Ribosomal_bS21_sf"/>
</dbReference>
<dbReference type="NCBIfam" id="TIGR00030">
    <property type="entry name" value="S21p"/>
    <property type="match status" value="1"/>
</dbReference>
<dbReference type="PANTHER" id="PTHR21109">
    <property type="entry name" value="MITOCHONDRIAL 28S RIBOSOMAL PROTEIN S21"/>
    <property type="match status" value="1"/>
</dbReference>
<dbReference type="PANTHER" id="PTHR21109:SF22">
    <property type="entry name" value="SMALL RIBOSOMAL SUBUNIT PROTEIN BS21"/>
    <property type="match status" value="1"/>
</dbReference>
<dbReference type="Pfam" id="PF01165">
    <property type="entry name" value="Ribosomal_S21"/>
    <property type="match status" value="1"/>
</dbReference>
<dbReference type="PRINTS" id="PR00976">
    <property type="entry name" value="RIBOSOMALS21"/>
</dbReference>
<dbReference type="PROSITE" id="PS01181">
    <property type="entry name" value="RIBOSOMAL_S21"/>
    <property type="match status" value="1"/>
</dbReference>
<evidence type="ECO:0000255" key="1">
    <source>
        <dbReference type="HAMAP-Rule" id="MF_00358"/>
    </source>
</evidence>
<evidence type="ECO:0000256" key="2">
    <source>
        <dbReference type="SAM" id="MobiDB-lite"/>
    </source>
</evidence>
<evidence type="ECO:0000305" key="3"/>